<name>RL31_MYCLB</name>
<sequence length="84" mass="9278">MKANIHPAYAETTVVCGCGNTFQTRSTKPGGRIVVEVCSQCHPFYTGKQKILDSGGRVARFEKRYGKRKVGVDQVAAYPEQNNK</sequence>
<proteinExistence type="inferred from homology"/>
<comment type="function">
    <text evidence="1">Binds the 23S rRNA.</text>
</comment>
<comment type="cofactor">
    <cofactor evidence="1">
        <name>Zn(2+)</name>
        <dbReference type="ChEBI" id="CHEBI:29105"/>
    </cofactor>
    <text evidence="1">Binds 1 zinc ion per subunit.</text>
</comment>
<comment type="subunit">
    <text evidence="1">Part of the 50S ribosomal subunit.</text>
</comment>
<comment type="similarity">
    <text evidence="1">Belongs to the bacterial ribosomal protein bL31 family. Type A subfamily.</text>
</comment>
<evidence type="ECO:0000255" key="1">
    <source>
        <dbReference type="HAMAP-Rule" id="MF_00501"/>
    </source>
</evidence>
<evidence type="ECO:0000305" key="2"/>
<protein>
    <recommendedName>
        <fullName evidence="1">Large ribosomal subunit protein bL31</fullName>
    </recommendedName>
    <alternativeName>
        <fullName evidence="2">50S ribosomal protein L31</fullName>
    </alternativeName>
</protein>
<gene>
    <name evidence="1" type="primary">rpmE</name>
    <name type="ordered locus">MLBr01133</name>
</gene>
<reference key="1">
    <citation type="journal article" date="2009" name="Nat. Genet.">
        <title>Comparative genomic and phylogeographic analysis of Mycobacterium leprae.</title>
        <authorList>
            <person name="Monot M."/>
            <person name="Honore N."/>
            <person name="Garnier T."/>
            <person name="Zidane N."/>
            <person name="Sherafi D."/>
            <person name="Paniz-Mondolfi A."/>
            <person name="Matsuoka M."/>
            <person name="Taylor G.M."/>
            <person name="Donoghue H.D."/>
            <person name="Bouwman A."/>
            <person name="Mays S."/>
            <person name="Watson C."/>
            <person name="Lockwood D."/>
            <person name="Khamispour A."/>
            <person name="Dowlati Y."/>
            <person name="Jianping S."/>
            <person name="Rea T.H."/>
            <person name="Vera-Cabrera L."/>
            <person name="Stefani M.M."/>
            <person name="Banu S."/>
            <person name="Macdonald M."/>
            <person name="Sapkota B.R."/>
            <person name="Spencer J.S."/>
            <person name="Thomas J."/>
            <person name="Harshman K."/>
            <person name="Singh P."/>
            <person name="Busso P."/>
            <person name="Gattiker A."/>
            <person name="Rougemont J."/>
            <person name="Brennan P.J."/>
            <person name="Cole S.T."/>
        </authorList>
    </citation>
    <scope>NUCLEOTIDE SEQUENCE [LARGE SCALE GENOMIC DNA]</scope>
    <source>
        <strain>Br4923</strain>
    </source>
</reference>
<keyword id="KW-0479">Metal-binding</keyword>
<keyword id="KW-0687">Ribonucleoprotein</keyword>
<keyword id="KW-0689">Ribosomal protein</keyword>
<keyword id="KW-0694">RNA-binding</keyword>
<keyword id="KW-0699">rRNA-binding</keyword>
<keyword id="KW-0862">Zinc</keyword>
<organism>
    <name type="scientific">Mycobacterium leprae (strain Br4923)</name>
    <dbReference type="NCBI Taxonomy" id="561304"/>
    <lineage>
        <taxon>Bacteria</taxon>
        <taxon>Bacillati</taxon>
        <taxon>Actinomycetota</taxon>
        <taxon>Actinomycetes</taxon>
        <taxon>Mycobacteriales</taxon>
        <taxon>Mycobacteriaceae</taxon>
        <taxon>Mycobacterium</taxon>
    </lineage>
</organism>
<dbReference type="EMBL" id="FM211192">
    <property type="protein sequence ID" value="CAR71228.1"/>
    <property type="molecule type" value="Genomic_DNA"/>
</dbReference>
<dbReference type="SMR" id="B8ZR30"/>
<dbReference type="KEGG" id="mlb:MLBr01133"/>
<dbReference type="HOGENOM" id="CLU_114306_1_0_11"/>
<dbReference type="Proteomes" id="UP000006900">
    <property type="component" value="Chromosome"/>
</dbReference>
<dbReference type="GO" id="GO:1990904">
    <property type="term" value="C:ribonucleoprotein complex"/>
    <property type="evidence" value="ECO:0007669"/>
    <property type="project" value="UniProtKB-KW"/>
</dbReference>
<dbReference type="GO" id="GO:0005840">
    <property type="term" value="C:ribosome"/>
    <property type="evidence" value="ECO:0007669"/>
    <property type="project" value="UniProtKB-KW"/>
</dbReference>
<dbReference type="GO" id="GO:0046872">
    <property type="term" value="F:metal ion binding"/>
    <property type="evidence" value="ECO:0007669"/>
    <property type="project" value="UniProtKB-KW"/>
</dbReference>
<dbReference type="GO" id="GO:0019843">
    <property type="term" value="F:rRNA binding"/>
    <property type="evidence" value="ECO:0007669"/>
    <property type="project" value="UniProtKB-KW"/>
</dbReference>
<dbReference type="GO" id="GO:0003735">
    <property type="term" value="F:structural constituent of ribosome"/>
    <property type="evidence" value="ECO:0007669"/>
    <property type="project" value="InterPro"/>
</dbReference>
<dbReference type="GO" id="GO:0006412">
    <property type="term" value="P:translation"/>
    <property type="evidence" value="ECO:0007669"/>
    <property type="project" value="UniProtKB-UniRule"/>
</dbReference>
<dbReference type="Gene3D" id="4.10.830.30">
    <property type="entry name" value="Ribosomal protein L31"/>
    <property type="match status" value="1"/>
</dbReference>
<dbReference type="HAMAP" id="MF_00501">
    <property type="entry name" value="Ribosomal_bL31_1"/>
    <property type="match status" value="1"/>
</dbReference>
<dbReference type="InterPro" id="IPR034704">
    <property type="entry name" value="Ribosomal_bL28/bL31-like_sf"/>
</dbReference>
<dbReference type="InterPro" id="IPR002150">
    <property type="entry name" value="Ribosomal_bL31"/>
</dbReference>
<dbReference type="InterPro" id="IPR027491">
    <property type="entry name" value="Ribosomal_bL31_A"/>
</dbReference>
<dbReference type="InterPro" id="IPR042105">
    <property type="entry name" value="Ribosomal_bL31_sf"/>
</dbReference>
<dbReference type="NCBIfam" id="TIGR00105">
    <property type="entry name" value="L31"/>
    <property type="match status" value="1"/>
</dbReference>
<dbReference type="NCBIfam" id="NF000612">
    <property type="entry name" value="PRK00019.1"/>
    <property type="match status" value="1"/>
</dbReference>
<dbReference type="NCBIfam" id="NF001809">
    <property type="entry name" value="PRK00528.1"/>
    <property type="match status" value="1"/>
</dbReference>
<dbReference type="PANTHER" id="PTHR33280">
    <property type="entry name" value="50S RIBOSOMAL PROTEIN L31, CHLOROPLASTIC"/>
    <property type="match status" value="1"/>
</dbReference>
<dbReference type="PANTHER" id="PTHR33280:SF1">
    <property type="entry name" value="LARGE RIBOSOMAL SUBUNIT PROTEIN BL31C"/>
    <property type="match status" value="1"/>
</dbReference>
<dbReference type="Pfam" id="PF01197">
    <property type="entry name" value="Ribosomal_L31"/>
    <property type="match status" value="1"/>
</dbReference>
<dbReference type="PRINTS" id="PR01249">
    <property type="entry name" value="RIBOSOMALL31"/>
</dbReference>
<dbReference type="SUPFAM" id="SSF143800">
    <property type="entry name" value="L28p-like"/>
    <property type="match status" value="1"/>
</dbReference>
<dbReference type="PROSITE" id="PS01143">
    <property type="entry name" value="RIBOSOMAL_L31"/>
    <property type="match status" value="1"/>
</dbReference>
<feature type="chain" id="PRO_1000176969" description="Large ribosomal subunit protein bL31">
    <location>
        <begin position="1"/>
        <end position="84"/>
    </location>
</feature>
<feature type="binding site" evidence="1">
    <location>
        <position position="16"/>
    </location>
    <ligand>
        <name>Zn(2+)</name>
        <dbReference type="ChEBI" id="CHEBI:29105"/>
    </ligand>
</feature>
<feature type="binding site" evidence="1">
    <location>
        <position position="18"/>
    </location>
    <ligand>
        <name>Zn(2+)</name>
        <dbReference type="ChEBI" id="CHEBI:29105"/>
    </ligand>
</feature>
<feature type="binding site" evidence="1">
    <location>
        <position position="38"/>
    </location>
    <ligand>
        <name>Zn(2+)</name>
        <dbReference type="ChEBI" id="CHEBI:29105"/>
    </ligand>
</feature>
<feature type="binding site" evidence="1">
    <location>
        <position position="41"/>
    </location>
    <ligand>
        <name>Zn(2+)</name>
        <dbReference type="ChEBI" id="CHEBI:29105"/>
    </ligand>
</feature>
<accession>B8ZR30</accession>